<evidence type="ECO:0000255" key="1">
    <source>
        <dbReference type="HAMAP-Rule" id="MF_01849"/>
    </source>
</evidence>
<evidence type="ECO:0000255" key="2">
    <source>
        <dbReference type="PROSITE-ProRule" id="PRU01266"/>
    </source>
</evidence>
<proteinExistence type="inferred from homology"/>
<protein>
    <recommendedName>
        <fullName evidence="1">Probable dual-specificity RNA methyltransferase RlmN 1</fullName>
        <ecNumber evidence="1">2.1.1.192</ecNumber>
    </recommendedName>
    <alternativeName>
        <fullName evidence="1">23S rRNA (adenine(2503)-C(2))-methyltransferase 1</fullName>
    </alternativeName>
    <alternativeName>
        <fullName evidence="1">23S rRNA m2A2503 methyltransferase 1</fullName>
    </alternativeName>
    <alternativeName>
        <fullName evidence="1">Ribosomal RNA large subunit methyltransferase N 1</fullName>
    </alternativeName>
    <alternativeName>
        <fullName evidence="1">tRNA (adenine(37)-C(2))-methyltransferase 1</fullName>
    </alternativeName>
    <alternativeName>
        <fullName evidence="1">tRNA m2A37 methyltransferase 1</fullName>
    </alternativeName>
</protein>
<dbReference type="EC" id="2.1.1.192" evidence="1"/>
<dbReference type="EMBL" id="BX908798">
    <property type="protein sequence ID" value="CAF23063.1"/>
    <property type="molecule type" value="Genomic_DNA"/>
</dbReference>
<dbReference type="RefSeq" id="WP_011174889.1">
    <property type="nucleotide sequence ID" value="NC_005861.2"/>
</dbReference>
<dbReference type="SMR" id="Q6MED6"/>
<dbReference type="STRING" id="264201.pc0339"/>
<dbReference type="KEGG" id="pcu:PC_RS01660"/>
<dbReference type="eggNOG" id="COG0820">
    <property type="taxonomic scope" value="Bacteria"/>
</dbReference>
<dbReference type="HOGENOM" id="CLU_029101_0_0_0"/>
<dbReference type="OrthoDB" id="9793973at2"/>
<dbReference type="Proteomes" id="UP000000529">
    <property type="component" value="Chromosome"/>
</dbReference>
<dbReference type="GO" id="GO:0005737">
    <property type="term" value="C:cytoplasm"/>
    <property type="evidence" value="ECO:0007669"/>
    <property type="project" value="UniProtKB-SubCell"/>
</dbReference>
<dbReference type="GO" id="GO:0051539">
    <property type="term" value="F:4 iron, 4 sulfur cluster binding"/>
    <property type="evidence" value="ECO:0007669"/>
    <property type="project" value="UniProtKB-UniRule"/>
</dbReference>
<dbReference type="GO" id="GO:0046872">
    <property type="term" value="F:metal ion binding"/>
    <property type="evidence" value="ECO:0007669"/>
    <property type="project" value="UniProtKB-KW"/>
</dbReference>
<dbReference type="GO" id="GO:0070040">
    <property type="term" value="F:rRNA (adenine(2503)-C2-)-methyltransferase activity"/>
    <property type="evidence" value="ECO:0007669"/>
    <property type="project" value="UniProtKB-UniRule"/>
</dbReference>
<dbReference type="GO" id="GO:0019843">
    <property type="term" value="F:rRNA binding"/>
    <property type="evidence" value="ECO:0007669"/>
    <property type="project" value="UniProtKB-UniRule"/>
</dbReference>
<dbReference type="GO" id="GO:0002935">
    <property type="term" value="F:tRNA (adenine(37)-C2)-methyltransferase activity"/>
    <property type="evidence" value="ECO:0007669"/>
    <property type="project" value="UniProtKB-UniRule"/>
</dbReference>
<dbReference type="GO" id="GO:0000049">
    <property type="term" value="F:tRNA binding"/>
    <property type="evidence" value="ECO:0007669"/>
    <property type="project" value="UniProtKB-UniRule"/>
</dbReference>
<dbReference type="GO" id="GO:0070475">
    <property type="term" value="P:rRNA base methylation"/>
    <property type="evidence" value="ECO:0007669"/>
    <property type="project" value="UniProtKB-UniRule"/>
</dbReference>
<dbReference type="GO" id="GO:0030488">
    <property type="term" value="P:tRNA methylation"/>
    <property type="evidence" value="ECO:0007669"/>
    <property type="project" value="UniProtKB-UniRule"/>
</dbReference>
<dbReference type="CDD" id="cd01335">
    <property type="entry name" value="Radical_SAM"/>
    <property type="match status" value="1"/>
</dbReference>
<dbReference type="FunFam" id="3.20.20.70:FF:000014">
    <property type="entry name" value="Probable dual-specificity RNA methyltransferase RlmN"/>
    <property type="match status" value="1"/>
</dbReference>
<dbReference type="Gene3D" id="3.20.20.70">
    <property type="entry name" value="Aldolase class I"/>
    <property type="match status" value="1"/>
</dbReference>
<dbReference type="HAMAP" id="MF_01849">
    <property type="entry name" value="RNA_methyltr_RlmN"/>
    <property type="match status" value="1"/>
</dbReference>
<dbReference type="InterPro" id="IPR013785">
    <property type="entry name" value="Aldolase_TIM"/>
</dbReference>
<dbReference type="InterPro" id="IPR040072">
    <property type="entry name" value="Methyltransferase_A"/>
</dbReference>
<dbReference type="InterPro" id="IPR027492">
    <property type="entry name" value="RNA_MTrfase_RlmN"/>
</dbReference>
<dbReference type="InterPro" id="IPR004383">
    <property type="entry name" value="rRNA_lsu_MTrfase_RlmN/Cfr"/>
</dbReference>
<dbReference type="InterPro" id="IPR007197">
    <property type="entry name" value="rSAM"/>
</dbReference>
<dbReference type="NCBIfam" id="TIGR00048">
    <property type="entry name" value="rRNA_mod_RlmN"/>
    <property type="match status" value="1"/>
</dbReference>
<dbReference type="PANTHER" id="PTHR30544">
    <property type="entry name" value="23S RRNA METHYLTRANSFERASE"/>
    <property type="match status" value="1"/>
</dbReference>
<dbReference type="PANTHER" id="PTHR30544:SF5">
    <property type="entry name" value="RADICAL SAM CORE DOMAIN-CONTAINING PROTEIN"/>
    <property type="match status" value="1"/>
</dbReference>
<dbReference type="Pfam" id="PF04055">
    <property type="entry name" value="Radical_SAM"/>
    <property type="match status" value="1"/>
</dbReference>
<dbReference type="PIRSF" id="PIRSF006004">
    <property type="entry name" value="CHP00048"/>
    <property type="match status" value="1"/>
</dbReference>
<dbReference type="SFLD" id="SFLDG01062">
    <property type="entry name" value="methyltransferase_(Class_A)"/>
    <property type="match status" value="1"/>
</dbReference>
<dbReference type="SFLD" id="SFLDS00029">
    <property type="entry name" value="Radical_SAM"/>
    <property type="match status" value="1"/>
</dbReference>
<dbReference type="SUPFAM" id="SSF102114">
    <property type="entry name" value="Radical SAM enzymes"/>
    <property type="match status" value="1"/>
</dbReference>
<dbReference type="PROSITE" id="PS51918">
    <property type="entry name" value="RADICAL_SAM"/>
    <property type="match status" value="1"/>
</dbReference>
<name>RLMN1_PARUW</name>
<keyword id="KW-0004">4Fe-4S</keyword>
<keyword id="KW-0963">Cytoplasm</keyword>
<keyword id="KW-1015">Disulfide bond</keyword>
<keyword id="KW-0408">Iron</keyword>
<keyword id="KW-0411">Iron-sulfur</keyword>
<keyword id="KW-0479">Metal-binding</keyword>
<keyword id="KW-0489">Methyltransferase</keyword>
<keyword id="KW-1185">Reference proteome</keyword>
<keyword id="KW-0698">rRNA processing</keyword>
<keyword id="KW-0949">S-adenosyl-L-methionine</keyword>
<keyword id="KW-0808">Transferase</keyword>
<keyword id="KW-0819">tRNA processing</keyword>
<feature type="chain" id="PRO_0000350326" description="Probable dual-specificity RNA methyltransferase RlmN 1">
    <location>
        <begin position="1"/>
        <end position="358"/>
    </location>
</feature>
<feature type="domain" description="Radical SAM core" evidence="2">
    <location>
        <begin position="101"/>
        <end position="326"/>
    </location>
</feature>
<feature type="active site" description="S-methylcysteine intermediate" evidence="1">
    <location>
        <position position="337"/>
    </location>
</feature>
<feature type="binding site" evidence="1">
    <location>
        <position position="115"/>
    </location>
    <ligand>
        <name>[4Fe-4S] cluster</name>
        <dbReference type="ChEBI" id="CHEBI:49883"/>
        <note>4Fe-4S-S-AdoMet</note>
    </ligand>
</feature>
<feature type="binding site" evidence="1">
    <location>
        <position position="119"/>
    </location>
    <ligand>
        <name>[4Fe-4S] cluster</name>
        <dbReference type="ChEBI" id="CHEBI:49883"/>
        <note>4Fe-4S-S-AdoMet</note>
    </ligand>
</feature>
<feature type="binding site" evidence="1">
    <location>
        <position position="122"/>
    </location>
    <ligand>
        <name>[4Fe-4S] cluster</name>
        <dbReference type="ChEBI" id="CHEBI:49883"/>
        <note>4Fe-4S-S-AdoMet</note>
    </ligand>
</feature>
<feature type="binding site" evidence="1">
    <location>
        <begin position="162"/>
        <end position="163"/>
    </location>
    <ligand>
        <name>S-adenosyl-L-methionine</name>
        <dbReference type="ChEBI" id="CHEBI:59789"/>
    </ligand>
</feature>
<feature type="binding site" evidence="1">
    <location>
        <position position="194"/>
    </location>
    <ligand>
        <name>S-adenosyl-L-methionine</name>
        <dbReference type="ChEBI" id="CHEBI:59789"/>
    </ligand>
</feature>
<feature type="binding site" evidence="1">
    <location>
        <begin position="218"/>
        <end position="220"/>
    </location>
    <ligand>
        <name>S-adenosyl-L-methionine</name>
        <dbReference type="ChEBI" id="CHEBI:59789"/>
    </ligand>
</feature>
<feature type="binding site" evidence="1">
    <location>
        <position position="294"/>
    </location>
    <ligand>
        <name>S-adenosyl-L-methionine</name>
        <dbReference type="ChEBI" id="CHEBI:59789"/>
    </ligand>
</feature>
<feature type="disulfide bond" description="(transient)" evidence="1">
    <location>
        <begin position="108"/>
        <end position="337"/>
    </location>
</feature>
<sequence length="358" mass="40409">MKIPPISILSHTSESYANAISHELGKGFQHAKLVYQEWFRRGNISGLNPAFKNAQALLQNILSLTDFSFLPISQNLTDGQTGKFLIKTIDDLDIKSVLIPMQAGGTLCISSQIGCQMGCAFCETGRMGLLRNLTTQEILSQLFIAKFRLHFSVRNIVFMGMGEPFDNYDTVMHAFRILTDSHGFGLGNNRITISTSGCLEGIYRLLQETTPLPNLAVSLNAPNDELRNKLMPINKKYPLKELYQAIYDFCKQTSKQVLIAYVLIKEQNDSIEHAKQLTNFLSGLNVKINLIPYNPQSRDRFQSPEQSTLENFTSYLREKGFYTLLRQTKGQKIMAACGQLGNLELKRKKPFILPILKE</sequence>
<comment type="function">
    <text evidence="1">Specifically methylates position 2 of adenine 2503 in 23S rRNA and position 2 of adenine 37 in tRNAs.</text>
</comment>
<comment type="catalytic activity">
    <reaction evidence="1">
        <text>adenosine(2503) in 23S rRNA + 2 reduced [2Fe-2S]-[ferredoxin] + 2 S-adenosyl-L-methionine = 2-methyladenosine(2503) in 23S rRNA + 5'-deoxyadenosine + L-methionine + 2 oxidized [2Fe-2S]-[ferredoxin] + S-adenosyl-L-homocysteine</text>
        <dbReference type="Rhea" id="RHEA:42916"/>
        <dbReference type="Rhea" id="RHEA-COMP:10000"/>
        <dbReference type="Rhea" id="RHEA-COMP:10001"/>
        <dbReference type="Rhea" id="RHEA-COMP:10152"/>
        <dbReference type="Rhea" id="RHEA-COMP:10282"/>
        <dbReference type="ChEBI" id="CHEBI:17319"/>
        <dbReference type="ChEBI" id="CHEBI:33737"/>
        <dbReference type="ChEBI" id="CHEBI:33738"/>
        <dbReference type="ChEBI" id="CHEBI:57844"/>
        <dbReference type="ChEBI" id="CHEBI:57856"/>
        <dbReference type="ChEBI" id="CHEBI:59789"/>
        <dbReference type="ChEBI" id="CHEBI:74411"/>
        <dbReference type="ChEBI" id="CHEBI:74497"/>
        <dbReference type="EC" id="2.1.1.192"/>
    </reaction>
</comment>
<comment type="catalytic activity">
    <reaction evidence="1">
        <text>adenosine(37) in tRNA + 2 reduced [2Fe-2S]-[ferredoxin] + 2 S-adenosyl-L-methionine = 2-methyladenosine(37) in tRNA + 5'-deoxyadenosine + L-methionine + 2 oxidized [2Fe-2S]-[ferredoxin] + S-adenosyl-L-homocysteine</text>
        <dbReference type="Rhea" id="RHEA:43332"/>
        <dbReference type="Rhea" id="RHEA-COMP:10000"/>
        <dbReference type="Rhea" id="RHEA-COMP:10001"/>
        <dbReference type="Rhea" id="RHEA-COMP:10162"/>
        <dbReference type="Rhea" id="RHEA-COMP:10485"/>
        <dbReference type="ChEBI" id="CHEBI:17319"/>
        <dbReference type="ChEBI" id="CHEBI:33737"/>
        <dbReference type="ChEBI" id="CHEBI:33738"/>
        <dbReference type="ChEBI" id="CHEBI:57844"/>
        <dbReference type="ChEBI" id="CHEBI:57856"/>
        <dbReference type="ChEBI" id="CHEBI:59789"/>
        <dbReference type="ChEBI" id="CHEBI:74411"/>
        <dbReference type="ChEBI" id="CHEBI:74497"/>
        <dbReference type="EC" id="2.1.1.192"/>
    </reaction>
</comment>
<comment type="cofactor">
    <cofactor evidence="1">
        <name>[4Fe-4S] cluster</name>
        <dbReference type="ChEBI" id="CHEBI:49883"/>
    </cofactor>
    <text evidence="1">Binds 1 [4Fe-4S] cluster. The cluster is coordinated with 3 cysteines and an exchangeable S-adenosyl-L-methionine.</text>
</comment>
<comment type="subcellular location">
    <subcellularLocation>
        <location evidence="1">Cytoplasm</location>
    </subcellularLocation>
</comment>
<comment type="miscellaneous">
    <text evidence="1">Reaction proceeds by a ping-pong mechanism involving intermediate methylation of a conserved cysteine residue.</text>
</comment>
<comment type="similarity">
    <text evidence="1">Belongs to the radical SAM superfamily. RlmN family.</text>
</comment>
<accession>Q6MED6</accession>
<organism>
    <name type="scientific">Protochlamydia amoebophila (strain UWE25)</name>
    <dbReference type="NCBI Taxonomy" id="264201"/>
    <lineage>
        <taxon>Bacteria</taxon>
        <taxon>Pseudomonadati</taxon>
        <taxon>Chlamydiota</taxon>
        <taxon>Chlamydiia</taxon>
        <taxon>Parachlamydiales</taxon>
        <taxon>Parachlamydiaceae</taxon>
        <taxon>Candidatus Protochlamydia</taxon>
    </lineage>
</organism>
<gene>
    <name evidence="1" type="primary">rlmN1</name>
    <name type="ordered locus">pc0339</name>
</gene>
<reference key="1">
    <citation type="journal article" date="2004" name="Science">
        <title>Illuminating the evolutionary history of chlamydiae.</title>
        <authorList>
            <person name="Horn M."/>
            <person name="Collingro A."/>
            <person name="Schmitz-Esser S."/>
            <person name="Beier C.L."/>
            <person name="Purkhold U."/>
            <person name="Fartmann B."/>
            <person name="Brandt P."/>
            <person name="Nyakatura G.J."/>
            <person name="Droege M."/>
            <person name="Frishman D."/>
            <person name="Rattei T."/>
            <person name="Mewes H.-W."/>
            <person name="Wagner M."/>
        </authorList>
    </citation>
    <scope>NUCLEOTIDE SEQUENCE [LARGE SCALE GENOMIC DNA]</scope>
    <source>
        <strain>UWE25</strain>
    </source>
</reference>